<dbReference type="EC" id="2.7.4.25" evidence="1"/>
<dbReference type="EMBL" id="BA000023">
    <property type="protein sequence ID" value="BAB65393.1"/>
    <property type="molecule type" value="Genomic_DNA"/>
</dbReference>
<dbReference type="RefSeq" id="WP_010978376.1">
    <property type="nucleotide sequence ID" value="NC_003106.2"/>
</dbReference>
<dbReference type="SMR" id="Q975K7"/>
<dbReference type="STRING" id="273063.STK_04080"/>
<dbReference type="GeneID" id="1458340"/>
<dbReference type="KEGG" id="sto:STK_04080"/>
<dbReference type="PATRIC" id="fig|273063.9.peg.473"/>
<dbReference type="eggNOG" id="arCOG01037">
    <property type="taxonomic scope" value="Archaea"/>
</dbReference>
<dbReference type="OrthoDB" id="31096at2157"/>
<dbReference type="Proteomes" id="UP000001015">
    <property type="component" value="Chromosome"/>
</dbReference>
<dbReference type="GO" id="GO:0005737">
    <property type="term" value="C:cytoplasm"/>
    <property type="evidence" value="ECO:0007669"/>
    <property type="project" value="UniProtKB-SubCell"/>
</dbReference>
<dbReference type="GO" id="GO:0005524">
    <property type="term" value="F:ATP binding"/>
    <property type="evidence" value="ECO:0007669"/>
    <property type="project" value="UniProtKB-UniRule"/>
</dbReference>
<dbReference type="GO" id="GO:0036430">
    <property type="term" value="F:CMP kinase activity"/>
    <property type="evidence" value="ECO:0007669"/>
    <property type="project" value="RHEA"/>
</dbReference>
<dbReference type="GO" id="GO:0036431">
    <property type="term" value="F:dCMP kinase activity"/>
    <property type="evidence" value="ECO:0007669"/>
    <property type="project" value="RHEA"/>
</dbReference>
<dbReference type="GO" id="GO:0006220">
    <property type="term" value="P:pyrimidine nucleotide metabolic process"/>
    <property type="evidence" value="ECO:0007669"/>
    <property type="project" value="UniProtKB-UniRule"/>
</dbReference>
<dbReference type="CDD" id="cd02020">
    <property type="entry name" value="CMPK"/>
    <property type="match status" value="1"/>
</dbReference>
<dbReference type="Gene3D" id="3.40.50.300">
    <property type="entry name" value="P-loop containing nucleotide triphosphate hydrolases"/>
    <property type="match status" value="1"/>
</dbReference>
<dbReference type="HAMAP" id="MF_00239">
    <property type="entry name" value="Cytidyl_kinase_type2"/>
    <property type="match status" value="1"/>
</dbReference>
<dbReference type="InterPro" id="IPR011892">
    <property type="entry name" value="Cyt_kin_arch"/>
</dbReference>
<dbReference type="InterPro" id="IPR011994">
    <property type="entry name" value="Cytidylate_kinase_dom"/>
</dbReference>
<dbReference type="InterPro" id="IPR027417">
    <property type="entry name" value="P-loop_NTPase"/>
</dbReference>
<dbReference type="NCBIfam" id="TIGR02173">
    <property type="entry name" value="cyt_kin_arch"/>
    <property type="match status" value="1"/>
</dbReference>
<dbReference type="Pfam" id="PF13189">
    <property type="entry name" value="Cytidylate_kin2"/>
    <property type="match status" value="1"/>
</dbReference>
<dbReference type="PRINTS" id="PR01100">
    <property type="entry name" value="SHIKIMTKNASE"/>
</dbReference>
<dbReference type="SUPFAM" id="SSF52540">
    <property type="entry name" value="P-loop containing nucleoside triphosphate hydrolases"/>
    <property type="match status" value="1"/>
</dbReference>
<gene>
    <name evidence="1" type="primary">cmk</name>
    <name type="ordered locus">STK_04080</name>
</gene>
<sequence length="180" mass="20459">MIIVISGPPGSGKSTVAKILSKNLSLKYISAGHIFRELAEKEGLSLLELNKKAEENFEIDKKIDREIFRIASTEKNIIIESHIGGWLLKDIADITVYLNASIEIRAMRIAKRDNIPFTKAIEQIIEREESHSRRFLAYYGIDLSDLSVFDLVINTDNLQPDEISKIIEAYLNFMLAKNIH</sequence>
<feature type="chain" id="PRO_0000132025" description="Cytidylate kinase">
    <location>
        <begin position="1"/>
        <end position="180"/>
    </location>
</feature>
<feature type="binding site" evidence="1">
    <location>
        <begin position="7"/>
        <end position="15"/>
    </location>
    <ligand>
        <name>ATP</name>
        <dbReference type="ChEBI" id="CHEBI:30616"/>
    </ligand>
</feature>
<comment type="catalytic activity">
    <reaction evidence="1">
        <text>CMP + ATP = CDP + ADP</text>
        <dbReference type="Rhea" id="RHEA:11600"/>
        <dbReference type="ChEBI" id="CHEBI:30616"/>
        <dbReference type="ChEBI" id="CHEBI:58069"/>
        <dbReference type="ChEBI" id="CHEBI:60377"/>
        <dbReference type="ChEBI" id="CHEBI:456216"/>
        <dbReference type="EC" id="2.7.4.25"/>
    </reaction>
</comment>
<comment type="catalytic activity">
    <reaction evidence="1">
        <text>dCMP + ATP = dCDP + ADP</text>
        <dbReference type="Rhea" id="RHEA:25094"/>
        <dbReference type="ChEBI" id="CHEBI:30616"/>
        <dbReference type="ChEBI" id="CHEBI:57566"/>
        <dbReference type="ChEBI" id="CHEBI:58593"/>
        <dbReference type="ChEBI" id="CHEBI:456216"/>
        <dbReference type="EC" id="2.7.4.25"/>
    </reaction>
</comment>
<comment type="subcellular location">
    <subcellularLocation>
        <location evidence="1">Cytoplasm</location>
    </subcellularLocation>
</comment>
<comment type="similarity">
    <text evidence="1">Belongs to the cytidylate kinase family. Type 2 subfamily.</text>
</comment>
<accession>Q975K7</accession>
<reference key="1">
    <citation type="journal article" date="2001" name="DNA Res.">
        <title>Complete genome sequence of an aerobic thermoacidophilic Crenarchaeon, Sulfolobus tokodaii strain7.</title>
        <authorList>
            <person name="Kawarabayasi Y."/>
            <person name="Hino Y."/>
            <person name="Horikawa H."/>
            <person name="Jin-no K."/>
            <person name="Takahashi M."/>
            <person name="Sekine M."/>
            <person name="Baba S."/>
            <person name="Ankai A."/>
            <person name="Kosugi H."/>
            <person name="Hosoyama A."/>
            <person name="Fukui S."/>
            <person name="Nagai Y."/>
            <person name="Nishijima K."/>
            <person name="Otsuka R."/>
            <person name="Nakazawa H."/>
            <person name="Takamiya M."/>
            <person name="Kato Y."/>
            <person name="Yoshizawa T."/>
            <person name="Tanaka T."/>
            <person name="Kudoh Y."/>
            <person name="Yamazaki J."/>
            <person name="Kushida N."/>
            <person name="Oguchi A."/>
            <person name="Aoki K."/>
            <person name="Masuda S."/>
            <person name="Yanagii M."/>
            <person name="Nishimura M."/>
            <person name="Yamagishi A."/>
            <person name="Oshima T."/>
            <person name="Kikuchi H."/>
        </authorList>
    </citation>
    <scope>NUCLEOTIDE SEQUENCE [LARGE SCALE GENOMIC DNA]</scope>
    <source>
        <strain>DSM 16993 / JCM 10545 / NBRC 100140 / 7</strain>
    </source>
</reference>
<proteinExistence type="inferred from homology"/>
<keyword id="KW-0067">ATP-binding</keyword>
<keyword id="KW-0963">Cytoplasm</keyword>
<keyword id="KW-0418">Kinase</keyword>
<keyword id="KW-0547">Nucleotide-binding</keyword>
<keyword id="KW-1185">Reference proteome</keyword>
<keyword id="KW-0808">Transferase</keyword>
<organism>
    <name type="scientific">Sulfurisphaera tokodaii (strain DSM 16993 / JCM 10545 / NBRC 100140 / 7)</name>
    <name type="common">Sulfolobus tokodaii</name>
    <dbReference type="NCBI Taxonomy" id="273063"/>
    <lineage>
        <taxon>Archaea</taxon>
        <taxon>Thermoproteota</taxon>
        <taxon>Thermoprotei</taxon>
        <taxon>Sulfolobales</taxon>
        <taxon>Sulfolobaceae</taxon>
        <taxon>Sulfurisphaera</taxon>
    </lineage>
</organism>
<name>KCY_SULTO</name>
<protein>
    <recommendedName>
        <fullName evidence="1">Cytidylate kinase</fullName>
        <shortName evidence="1">CK</shortName>
        <ecNumber evidence="1">2.7.4.25</ecNumber>
    </recommendedName>
    <alternativeName>
        <fullName evidence="1">Cytidine monophosphate kinase</fullName>
        <shortName evidence="1">CMP kinase</shortName>
    </alternativeName>
</protein>
<evidence type="ECO:0000255" key="1">
    <source>
        <dbReference type="HAMAP-Rule" id="MF_00239"/>
    </source>
</evidence>